<accession>Q08358</accession>
<accession>Q65287</accession>
<sequence length="2475" mass="281482">MGNRGSSTSSRPPLSSEANLYAKLQDHIQRQTRPFSGGGYFNGGGDKNPVQHIKDYHIDSVSSKAKLRVIEGIIRAIAKIGFKVDTKQPIEDILKDIKKQLPDPRAGSTFVKNAEKQETVCKMIADAINQEFIDLGQDKLIDTTDGAASICRQIVLYINSLTHGLRAEYLDVHGSIENTLENIKLLNDAIKQLHERMVTEVTKAAPNEEVINAVTMIEAVYRRLLNEQNLQINILTNFIDNILTPTQKELDKLQTDEVDIIKLLNDTNSVLGTKNFGKVLSYTLCNLGIAASVANKINKALQKVGLKVEQYLQSKNWAEFDKELDLKRFSGLVSAENIAEFEKAVNLLRQTFNERHKILENSCAKKGGDEEKTPLDRRIEAQRLDRKHILMEFLNKSTQAYNDFLENVKKIGIKLVKEIALTPNITRLRDALSRINDMGTIALDLSLIGFYTNAAAREERETFLTQFMLVKNVLEEQSKIDPNFKNLYDSCSRLLQIIDFYTDIVQKKYGGGEDCECTRVGGAALTVEELGLSKAARSQVDLNQAINTFMYYYYVAQIYSNLTHNKQEFQSYEENYATILGDAIAGRLMQLDTEKNARINSPAVDLARGHVGPNPGGAQEADWKAAVSAIELEYDVKRRFYRALEGLDLYLKNITKTFVNNIDSIQTVQQMLDGVRIIGRWFTEATGDTLAQVFESFPTSAGNDSNVFTDNAPAGHYYEKVAAEIQQGRSVGTLRPVRASQAKNIRDLIGRSLSNFQALKNIINAFARIGDMLGGEELRQMVPMSPLQIYKTLLEYIQHSALSVGLKNLNQSEIGGQRVALARTPEEAAQRVYLSTVRVNDALSTRWETEDVFFTFMLKSMAAKIFIVLGIYDMFERPEPVYKLIPTRMILGGADELEPEVIPEAAELYFRLPRLAEFYQKLFSFRDENVQISMLPELEGIFSGLIRIIFMRPIELINIGDYSETEIRQLIKEINVIYQHFNLEYGEQEATKKALIHFVNEINRRFGVITRTEWEKFQRIVQEARTMNDFGMMNQTNYSILPDEDGYTQSSQLLPSDRFISPSTQPTPKWRPALYNIDSVDVQTGMLQPNSQWDLVQKFRKQLSEMFEDPSLQQELGKVSYQELIRQAINELKKEHTDKIQIVSKLIQGSESLADTDVNKIFLFHETVITGLNLLSAIYVLLNNFRNNIKGLDLDTIQKSIIEWLRETQAANVNRANLIDWLGRKHGAISEIRNPGLVVKENDVRLSRVYPDPTTNATAPQDQNLVTETLFAWIVPYVGIPAGGGVRAEQELAARYLVDNQRIMQLLLTNIFEMTSSFNKMVQVRFPETSTAQVHLDFTGLISLIDSLMADTKYFLNLLRPHIDKNIIQYYENRSNPGSFYWLEEHLIDKLIKPPTDAGGRPLPGGELGLEGVNQIINKTYILLTKPYNVLQLRGGVQRRDAANIQINNNPQPSERFEQYGRVFSRLVFYDALENNSGLRVEQVVLGDFRLSNLIRTNNAQEENTLSYWDNMAPRTYANVNDAANNLRRYRLYGSDYGIQNNRSMMMVFNQLVASYIARFYDAPSGKIYLNLINAFANGNFSQAVMELGYTHPDLARDNIAFGHRGDPTEQSVLLLSLGLMLQRLIKDTNRQGLSQHLISTLTEIPIYLKENYRANLPLFNKMFNILISQGELLKQFIQYTNVQLARPNLMGLLGANNDSVIYYNNNINVPMTGLSVGQAALRGIGGVFRPNVTLMPLGDAQNNTSDVVRKRLVAVIDGIIRGSHTLADSAMEVLHELTDHPIYLETEEHFIQNYMSRYNKEPLMPFSLSLYYLRDLRIENNEVYDPLLYPNLESGSPEFKLLYGTRKLLGNDPVQLSDMPGVQLIMKNYNETVVAREQITPTRFEHFYTHAIQALRFIVNIRSFKTVMMYNENTFGGVNLISENRDDKPIITAGIGMNAVYSLRKTLQDVISFVESSYQEEQINHIHKIVSPKGQTRTLGSNRERERIFNLFDMNIIPINVNALMRSIPLANIYNYDYSFEEIACLMYGISAEKVRSLNTAAPQPDIAEVLNIPNRPPMNTREFMLKLLINPYVSVSITQYGNELMSKGSAGYMSRIFRGDNALNMGRPKFLSDQIFNKVLFGSLYPTQFDYDEAGPGLAAGIQRGREQWGQPLSEYINQALHELVRTIRIPQKLRVLRNIIVKNQLIADLTTIREQLVSMRREVENMIQTPEIQNNPTPEVIAAAQNWTQQYRARVDTLINFIGNIGQPNSMLDLIQTITPVTVRAQLGVIFNRHGIPVPHPRQILQTDDEATQWFMTNILNIPAIIMTPFTDLANDLRTFLETLERYVFNVPRWLGPSTGRVARAPVRMAPRDMRHPISYTENSVLTYITEQNREEGPWSIVKQVGVGIQKPTLVQIGKDRFDTRLIRNLIFITNIQRLLRLRLNLELSQFRNVLVSPDHIINPSITEYGFSITGPSETFSDKQYDSDIRIL</sequence>
<name>PP220_ASFB7</name>
<organismHost>
    <name type="scientific">Ornithodoros</name>
    <name type="common">relapsing fever ticks</name>
    <dbReference type="NCBI Taxonomy" id="6937"/>
</organismHost>
<organismHost>
    <name type="scientific">Sus scrofa</name>
    <name type="common">Pig</name>
    <dbReference type="NCBI Taxonomy" id="9823"/>
</organismHost>
<reference key="1">
    <citation type="journal article" date="1993" name="EMBO J.">
        <title>Polyprotein processing in African swine fever virus: a novel gene expression strategy for a DNA virus.</title>
        <authorList>
            <person name="Simon-Mateo C."/>
            <person name="Andres G."/>
            <person name="Vinuela E."/>
        </authorList>
    </citation>
    <scope>NUCLEOTIDE SEQUENCE [GENOMIC DNA]</scope>
    <scope>MYRISTOYLATION AT GLY-2</scope>
    <scope>PROTEOLYTIC CLEAVAGE (POLYPROTEIN PP220)</scope>
</reference>
<reference key="2">
    <citation type="journal article" date="1995" name="Virology">
        <title>Analysis of the complete nucleotide sequence of African swine fever virus.</title>
        <authorList>
            <person name="Yanez R.J."/>
            <person name="Rodriguez J.M."/>
            <person name="Nogal M.L."/>
            <person name="Yuste L."/>
            <person name="Enriquez C."/>
            <person name="Rodriguez J.F."/>
            <person name="Vinuela E."/>
        </authorList>
    </citation>
    <scope>NUCLEOTIDE SEQUENCE [LARGE SCALE GENOMIC DNA]</scope>
</reference>
<reference key="3">
    <citation type="journal article" date="1988" name="Virus Genes">
        <title>Mapping and sequence of the gene encoding protein p37, a major structural protein of African swine fever virus.</title>
        <authorList>
            <person name="Lopez-Otin C."/>
            <person name="Simon C."/>
            <person name="Mendez E."/>
            <person name="Vinuela E."/>
        </authorList>
    </citation>
    <scope>NUCLEOTIDE SEQUENCE [GENOMIC DNA] OF 391-808</scope>
</reference>
<reference key="4">
    <citation type="journal article" date="1997" name="J. Virol.">
        <title>Assembly of African swine fever virus: role of polyprotein pp220.</title>
        <authorList>
            <person name="Andres G."/>
            <person name="Simon-Mateo C."/>
            <person name="Vinuela E."/>
        </authorList>
    </citation>
    <scope>FUNCTION</scope>
    <scope>SUBCELLULAR LOCATION (POLYPROTEIN PP220)</scope>
</reference>
<reference key="5">
    <citation type="journal article" date="2002" name="J. Virol.">
        <title>Repression of African swine fever virus polyprotein pp220-encoding gene leads to the assembly of icosahedral core-less particles.</title>
        <authorList>
            <person name="Andres G."/>
            <person name="Garcia-Escudero R."/>
            <person name="Salas M.L."/>
            <person name="Rodriguez J.M."/>
        </authorList>
    </citation>
    <scope>FUNCTION (POLYPROTEIN PP220)</scope>
</reference>
<reference key="6">
    <citation type="journal article" date="2002" name="J. Virol.">
        <title>African swine fever virus polyproteins pp220 and pp62 assemble into the core shell.</title>
        <authorList>
            <person name="Andres G."/>
            <person name="Alejo A."/>
            <person name="Salas J."/>
            <person name="Salas M.L."/>
        </authorList>
    </citation>
    <scope>SUBCELLULAR LOCATION (P150)</scope>
    <scope>SUBCELLULAR LOCATION (P34)</scope>
    <scope>SUBCELLULAR LOCATION (P37)</scope>
    <scope>SUBCELLULAR LOCATION (P14)</scope>
    <scope>FUNCTION (P34)</scope>
    <scope>FUNCTION (P37)</scope>
    <scope>FUNCTION (P14)</scope>
    <scope>FUNCTION (P150)</scope>
</reference>
<reference key="7">
    <citation type="journal article" date="2003" name="J. Virol.">
        <title>Membrane association facilitates the correct processing of pp220 during production of the major matrix proteins of African swine fever virus.</title>
        <authorList>
            <person name="Heath C.M."/>
            <person name="Windsor M."/>
            <person name="Wileman T."/>
        </authorList>
    </citation>
    <scope>SUBCELLULAR LOCATION (P150)</scope>
    <scope>SUBCELLULAR LOCATION (P34)</scope>
</reference>
<reference key="8">
    <citation type="journal article" date="2007" name="Virus Res.">
        <title>African swine fever virus p37 structural protein is localized in nuclear foci containing the viral DNA at early post-infection times.</title>
        <authorList>
            <person name="Eulalio A."/>
            <person name="Nunes-Correia I."/>
            <person name="Salas J."/>
            <person name="Salas M.L."/>
            <person name="Simoes S."/>
            <person name="Pedroso de Lima M.C."/>
        </authorList>
    </citation>
    <scope>SUBCELLULAR LOCATION (P37)</scope>
</reference>
<reference key="9">
    <citation type="journal article" date="2018" name="J. Virol.">
        <title>A Proteomic Atlas of the African Swine Fever Virus Particle.</title>
        <authorList>
            <person name="Alejo A."/>
            <person name="Matamoros T."/>
            <person name="Guerra M."/>
            <person name="Andres G."/>
        </authorList>
    </citation>
    <scope>SUBCELLULAR LOCATION (P34)</scope>
    <scope>SUBCELLULAR LOCATION (P150)</scope>
    <scope>SUBCELLULAR LOCATION (P37)</scope>
    <scope>SUBCELLULAR LOCATION (P14)</scope>
    <scope>SUBCELLULAR LOCATION (P5)</scope>
</reference>
<reference key="10">
    <citation type="journal article" date="2020" name="J. Virol.">
        <title>The African Swine Fever Virus Transcriptome.</title>
        <authorList>
            <person name="Cackett G."/>
            <person name="Matelska D."/>
            <person name="Sykora M."/>
            <person name="Portugal R."/>
            <person name="Malecki M."/>
            <person name="Baehler J."/>
            <person name="Dixon L."/>
            <person name="Werner F."/>
        </authorList>
    </citation>
    <scope>INDUCTION (POLYPROTEIN PP220)</scope>
</reference>
<reference key="11">
    <citation type="journal article" date="2021" name="Viruses">
        <title>Unpicking the Secrets of African Swine Fever Viral Replication Sites.</title>
        <authorList>
            <person name="Aicher S.M."/>
            <person name="Monaghan P."/>
            <person name="Netherton C.L."/>
            <person name="Hawes P.C."/>
        </authorList>
    </citation>
    <scope>SUBCELLULAR LOCATION (P34)</scope>
</reference>
<keyword id="KW-0175">Coiled coil</keyword>
<keyword id="KW-1035">Host cytoplasm</keyword>
<keyword id="KW-1048">Host nucleus</keyword>
<keyword id="KW-0426">Late protein</keyword>
<keyword id="KW-0449">Lipoprotein</keyword>
<keyword id="KW-0519">Myristate</keyword>
<keyword id="KW-1185">Reference proteome</keyword>
<keyword id="KW-0946">Virion</keyword>
<dbReference type="EMBL" id="Z22777">
    <property type="protein sequence ID" value="CAA80455.1"/>
    <property type="molecule type" value="Genomic_DNA"/>
</dbReference>
<dbReference type="EMBL" id="U18466">
    <property type="protein sequence ID" value="AAA65321.1"/>
    <property type="molecule type" value="Genomic_DNA"/>
</dbReference>
<dbReference type="EMBL" id="X87965">
    <property type="protein sequence ID" value="CAA61203.1"/>
    <property type="status" value="ALT_FRAME"/>
    <property type="molecule type" value="Genomic_DNA"/>
</dbReference>
<dbReference type="PIR" id="S35307">
    <property type="entry name" value="S35307"/>
</dbReference>
<dbReference type="RefSeq" id="NP_042785.1">
    <property type="nucleotide sequence ID" value="NC_001659.2"/>
</dbReference>
<dbReference type="SMR" id="Q08358"/>
<dbReference type="ELM" id="Q08358"/>
<dbReference type="iPTMnet" id="Q08358"/>
<dbReference type="GeneID" id="22220321"/>
<dbReference type="KEGG" id="vg:22220321"/>
<dbReference type="Proteomes" id="UP000000624">
    <property type="component" value="Segment"/>
</dbReference>
<dbReference type="GO" id="GO:0042025">
    <property type="term" value="C:host cell nucleus"/>
    <property type="evidence" value="ECO:0007669"/>
    <property type="project" value="UniProtKB-SubCell"/>
</dbReference>
<dbReference type="GO" id="GO:0044220">
    <property type="term" value="C:host cell perinuclear region of cytoplasm"/>
    <property type="evidence" value="ECO:0007669"/>
    <property type="project" value="UniProtKB-SubCell"/>
</dbReference>
<dbReference type="GO" id="GO:0044423">
    <property type="term" value="C:virion component"/>
    <property type="evidence" value="ECO:0007669"/>
    <property type="project" value="UniProtKB-KW"/>
</dbReference>
<dbReference type="GO" id="GO:0019069">
    <property type="term" value="P:viral capsid assembly"/>
    <property type="evidence" value="ECO:0000314"/>
    <property type="project" value="CACAO"/>
</dbReference>
<comment type="function">
    <molecule>Polyprotein pp220</molecule>
    <text evidence="2">Essential for the core assembly. Its myristoyl moiety may function as a membrane-anchoring signal to bind the developing core shell to the inner viral envelope.</text>
</comment>
<comment type="function">
    <molecule>p34</molecule>
    <text evidence="3">The structural protein p34 is a component of the virus core shell.</text>
</comment>
<comment type="function">
    <molecule>p14</molecule>
    <text evidence="3">The structural protein p14 is a component of the virus core shell.</text>
</comment>
<comment type="function">
    <molecule>p37</molecule>
    <text evidence="3">The structural protein p37 is a component of the virus core shell.</text>
</comment>
<comment type="function">
    <molecule>p150</molecule>
    <text evidence="3">The structural protein p150 is a component of the virus core shell.</text>
</comment>
<comment type="subcellular location">
    <molecule>Polyprotein pp220</molecule>
    <subcellularLocation>
        <location evidence="10">Host cytoplasm</location>
        <location evidence="10">Host perinuclear region</location>
    </subcellularLocation>
    <text evidence="10">Found in perinuclear cytoplasmic viral factories during assembly.</text>
</comment>
<comment type="subcellular location">
    <molecule>p34</molecule>
    <subcellularLocation>
        <location evidence="6">Virion</location>
    </subcellularLocation>
    <subcellularLocation>
        <location evidence="4">Host cytoplasm</location>
        <location evidence="4">Host perinuclear region</location>
    </subcellularLocation>
    <text evidence="3 8">Localizes to the viral factory at 16 hpi (PubMed:33429879). In the virion, located in the core shell, which functions like a matrix between the DNA-containing nucleoid and the inner envelope (PubMed:12438573).</text>
</comment>
<comment type="subcellular location">
    <molecule>p14</molecule>
    <subcellularLocation>
        <location evidence="6">Virion</location>
    </subcellularLocation>
    <subcellularLocation>
        <location>Host cytoplasm</location>
        <location>Host perinuclear region</location>
    </subcellularLocation>
    <text evidence="3">Found in perinuclear cytoplasmic viral factories during assembly. In the virion, located in the core shell, which functions like a matrix between the DNA-containing nucleoid and the inner envelope (PubMed:12438573).</text>
</comment>
<comment type="subcellular location">
    <molecule>p37</molecule>
    <subcellularLocation>
        <location evidence="6">Virion</location>
    </subcellularLocation>
    <subcellularLocation>
        <location evidence="5">Host cytoplasm</location>
        <location evidence="5">Host perinuclear region</location>
    </subcellularLocation>
    <subcellularLocation>
        <location evidence="5">Host nucleus</location>
    </subcellularLocation>
    <text evidence="3">Found in perinuclear cytoplasmic viral factories during assembly. In the virion, located in the core shell, which functions like a matrix between the DNA-containing nucleoid and the inner envelope (PubMed:12438573).</text>
</comment>
<comment type="subcellular location">
    <molecule>p150</molecule>
    <subcellularLocation>
        <location evidence="3 6">Virion</location>
    </subcellularLocation>
    <subcellularLocation>
        <location evidence="4">Host cytoplasm</location>
        <location evidence="4">Host perinuclear region</location>
    </subcellularLocation>
    <text evidence="3">Found in perinuclear cytoplasmic viral factories during assembly. In the virion, located in the core shell, which functions like a matrix between the DNA-containing nucleoid and the inner envelope (PubMed:12438573).</text>
</comment>
<comment type="subcellular location">
    <molecule>p5</molecule>
    <subcellularLocation>
        <location evidence="6">Virion</location>
    </subcellularLocation>
</comment>
<comment type="induction">
    <molecule>Polyprotein pp220</molecule>
    <text evidence="7">Expressed in the late phase of the viral replicative cycle.</text>
</comment>
<comment type="PTM">
    <molecule>Polyprotein pp220</molecule>
    <text>The polyprotein is not glycosylated.</text>
</comment>
<comment type="PTM">
    <molecule>Polyprotein pp220</molecule>
    <text evidence="9">Specific enzymatic cleavages in vivo by the viral pS273R protease yield mature proteins.</text>
</comment>
<comment type="similarity">
    <text evidence="12">Belongs to the asfivirus polyprotein pp220 family.</text>
</comment>
<comment type="sequence caution" evidence="12">
    <conflict type="frameshift">
        <sequence resource="EMBL-CDS" id="CAA61203"/>
    </conflict>
</comment>
<gene>
    <name type="ordered locus">Ba71V-92</name>
    <name type="ORF">CP2475L</name>
</gene>
<protein>
    <recommendedName>
        <fullName evidence="11">Polyprotein pp220</fullName>
    </recommendedName>
    <alternativeName>
        <fullName>220 kDa polyprotein</fullName>
    </alternativeName>
    <component>
        <recommendedName>
            <fullName evidence="11">p34</fullName>
        </recommendedName>
    </component>
    <component>
        <recommendedName>
            <fullName evidence="11">p14</fullName>
        </recommendedName>
    </component>
    <component>
        <recommendedName>
            <fullName evidence="11">p37</fullName>
        </recommendedName>
    </component>
    <component>
        <recommendedName>
            <fullName evidence="11">p150</fullName>
        </recommendedName>
    </component>
    <component>
        <recommendedName>
            <fullName evidence="11">p5</fullName>
        </recommendedName>
    </component>
</protein>
<organism>
    <name type="scientific">African swine fever virus (strain Badajoz 1971 Vero-adapted)</name>
    <name type="common">Ba71V</name>
    <name type="synonym">ASFV</name>
    <dbReference type="NCBI Taxonomy" id="10498"/>
    <lineage>
        <taxon>Viruses</taxon>
        <taxon>Varidnaviria</taxon>
        <taxon>Bamfordvirae</taxon>
        <taxon>Nucleocytoviricota</taxon>
        <taxon>Pokkesviricetes</taxon>
        <taxon>Asfuvirales</taxon>
        <taxon>Asfarviridae</taxon>
        <taxon>Asfivirus</taxon>
        <taxon>African swine fever virus</taxon>
    </lineage>
</organism>
<proteinExistence type="evidence at protein level"/>
<feature type="initiator methionine" description="Removed; by host">
    <location>
        <position position="1"/>
    </location>
</feature>
<feature type="chain" id="PRO_0000454695" description="p5">
    <location>
        <begin position="2"/>
        <end position="44"/>
    </location>
</feature>
<feature type="chain" id="PRO_0000355531" description="Polyprotein pp220">
    <location>
        <begin position="45"/>
        <end position="2475"/>
    </location>
</feature>
<feature type="chain" id="PRO_0000036723" description="p34">
    <location>
        <begin position="45"/>
        <end position="368"/>
    </location>
</feature>
<feature type="chain" id="PRO_0000036724" description="p14">
    <location>
        <begin position="369"/>
        <end position="522"/>
    </location>
</feature>
<feature type="chain" id="PRO_0000036725" description="p37">
    <location>
        <begin position="523"/>
        <end position="893"/>
    </location>
</feature>
<feature type="chain" id="PRO_0000036726" description="p150">
    <location>
        <begin position="894"/>
        <end position="2475"/>
    </location>
</feature>
<feature type="coiled-coil region" evidence="1">
    <location>
        <begin position="2185"/>
        <end position="2212"/>
    </location>
</feature>
<feature type="site" description="Cleavage; by viral protease S273R" evidence="13">
    <location>
        <begin position="44"/>
        <end position="45"/>
    </location>
</feature>
<feature type="site" description="Cleavage; by viral protease S273R" evidence="13">
    <location>
        <begin position="368"/>
        <end position="369"/>
    </location>
</feature>
<feature type="site" description="Cleavage; by viral protease S273R" evidence="13">
    <location>
        <begin position="522"/>
        <end position="523"/>
    </location>
</feature>
<feature type="site" description="Cleavage; by viral protease S273R" evidence="13">
    <location>
        <begin position="893"/>
        <end position="894"/>
    </location>
</feature>
<feature type="lipid moiety-binding region" description="N-myristoyl glycine; by host" evidence="9">
    <location>
        <position position="2"/>
    </location>
</feature>
<evidence type="ECO:0000255" key="1"/>
<evidence type="ECO:0000269" key="2">
    <source>
    </source>
</evidence>
<evidence type="ECO:0000269" key="3">
    <source>
    </source>
</evidence>
<evidence type="ECO:0000269" key="4">
    <source>
    </source>
</evidence>
<evidence type="ECO:0000269" key="5">
    <source>
    </source>
</evidence>
<evidence type="ECO:0000269" key="6">
    <source>
    </source>
</evidence>
<evidence type="ECO:0000269" key="7">
    <source>
    </source>
</evidence>
<evidence type="ECO:0000269" key="8">
    <source>
    </source>
</evidence>
<evidence type="ECO:0000269" key="9">
    <source>
    </source>
</evidence>
<evidence type="ECO:0000269" key="10">
    <source>
    </source>
</evidence>
<evidence type="ECO:0000303" key="11">
    <source>
    </source>
</evidence>
<evidence type="ECO:0000305" key="12"/>
<evidence type="ECO:0000305" key="13">
    <source>
    </source>
</evidence>